<keyword id="KW-0143">Chaperone</keyword>
<keyword id="KW-0963">Cytoplasm</keyword>
<keyword id="KW-0235">DNA replication</keyword>
<keyword id="KW-0479">Metal-binding</keyword>
<keyword id="KW-0677">Repeat</keyword>
<keyword id="KW-0346">Stress response</keyword>
<keyword id="KW-0862">Zinc</keyword>
<keyword id="KW-0863">Zinc-finger</keyword>
<proteinExistence type="inferred from homology"/>
<sequence length="377" mass="42344">MAKKDYYQILGIPKSAEEREIKKAYKKLAMKYHPDRNQGDKTAEGKFKEIKEAYEILINEEKRSAYDQYGHAAFENGQSNSTYSTFTNSADFSDIFGDVFGDIFGGNRTQRAKKGADLCYNMEITLEEAVKGIKKEIQIPTLQKCKTCYGSGTRTGTKPRSCSTCHGKGQIHIRKGFFTVQQSCPTCHGKGTIITDPCNLCHGQGRVETYKILSVKIPPGLDTNDRIRLNNEGEAGANGAQSGDLYVQITVKKHPIFEREGNNLYCEVPINFTMAALGGEIEVPTLDGRVKLKIPYETQSGKLFRIRGRGVKSVQNRNQGDLLCRVVVETPVNLNEQQKNLLHELGNSFHGFRGEKNSPRSKRFFDGVKRFFDDLTR</sequence>
<name>DNAJ_BUCA5</name>
<gene>
    <name evidence="1" type="primary">dnaJ</name>
    <name type="ordered locus">BUAP5A_150</name>
</gene>
<reference key="1">
    <citation type="journal article" date="2009" name="Science">
        <title>The dynamics and time scale of ongoing genomic erosion in symbiotic bacteria.</title>
        <authorList>
            <person name="Moran N.A."/>
            <person name="McLaughlin H.J."/>
            <person name="Sorek R."/>
        </authorList>
    </citation>
    <scope>NUCLEOTIDE SEQUENCE [LARGE SCALE GENOMIC DNA]</scope>
    <source>
        <strain>5A</strain>
    </source>
</reference>
<dbReference type="EMBL" id="CP001161">
    <property type="protein sequence ID" value="ACL30525.1"/>
    <property type="molecule type" value="Genomic_DNA"/>
</dbReference>
<dbReference type="RefSeq" id="WP_009874108.1">
    <property type="nucleotide sequence ID" value="NC_011833.1"/>
</dbReference>
<dbReference type="SMR" id="B8D8V3"/>
<dbReference type="KEGG" id="bap:BUAP5A_150"/>
<dbReference type="HOGENOM" id="CLU_017633_0_7_6"/>
<dbReference type="OrthoDB" id="9779889at2"/>
<dbReference type="Proteomes" id="UP000006904">
    <property type="component" value="Chromosome"/>
</dbReference>
<dbReference type="GO" id="GO:0005737">
    <property type="term" value="C:cytoplasm"/>
    <property type="evidence" value="ECO:0007669"/>
    <property type="project" value="UniProtKB-SubCell"/>
</dbReference>
<dbReference type="GO" id="GO:0005524">
    <property type="term" value="F:ATP binding"/>
    <property type="evidence" value="ECO:0007669"/>
    <property type="project" value="InterPro"/>
</dbReference>
<dbReference type="GO" id="GO:0031072">
    <property type="term" value="F:heat shock protein binding"/>
    <property type="evidence" value="ECO:0007669"/>
    <property type="project" value="InterPro"/>
</dbReference>
<dbReference type="GO" id="GO:0051082">
    <property type="term" value="F:unfolded protein binding"/>
    <property type="evidence" value="ECO:0007669"/>
    <property type="project" value="UniProtKB-UniRule"/>
</dbReference>
<dbReference type="GO" id="GO:0008270">
    <property type="term" value="F:zinc ion binding"/>
    <property type="evidence" value="ECO:0007669"/>
    <property type="project" value="UniProtKB-UniRule"/>
</dbReference>
<dbReference type="GO" id="GO:0051085">
    <property type="term" value="P:chaperone cofactor-dependent protein refolding"/>
    <property type="evidence" value="ECO:0007669"/>
    <property type="project" value="TreeGrafter"/>
</dbReference>
<dbReference type="GO" id="GO:0006260">
    <property type="term" value="P:DNA replication"/>
    <property type="evidence" value="ECO:0007669"/>
    <property type="project" value="UniProtKB-KW"/>
</dbReference>
<dbReference type="GO" id="GO:0042026">
    <property type="term" value="P:protein refolding"/>
    <property type="evidence" value="ECO:0007669"/>
    <property type="project" value="TreeGrafter"/>
</dbReference>
<dbReference type="GO" id="GO:0009408">
    <property type="term" value="P:response to heat"/>
    <property type="evidence" value="ECO:0007669"/>
    <property type="project" value="InterPro"/>
</dbReference>
<dbReference type="CDD" id="cd06257">
    <property type="entry name" value="DnaJ"/>
    <property type="match status" value="1"/>
</dbReference>
<dbReference type="CDD" id="cd10747">
    <property type="entry name" value="DnaJ_C"/>
    <property type="match status" value="1"/>
</dbReference>
<dbReference type="CDD" id="cd10719">
    <property type="entry name" value="DnaJ_zf"/>
    <property type="match status" value="1"/>
</dbReference>
<dbReference type="FunFam" id="1.10.287.110:FF:000034">
    <property type="entry name" value="Chaperone protein DnaJ"/>
    <property type="match status" value="1"/>
</dbReference>
<dbReference type="FunFam" id="2.10.230.10:FF:000002">
    <property type="entry name" value="Molecular chaperone DnaJ"/>
    <property type="match status" value="1"/>
</dbReference>
<dbReference type="FunFam" id="2.60.260.20:FF:000004">
    <property type="entry name" value="Molecular chaperone DnaJ"/>
    <property type="match status" value="1"/>
</dbReference>
<dbReference type="Gene3D" id="1.10.287.110">
    <property type="entry name" value="DnaJ domain"/>
    <property type="match status" value="1"/>
</dbReference>
<dbReference type="Gene3D" id="2.10.230.10">
    <property type="entry name" value="Heat shock protein DnaJ, cysteine-rich domain"/>
    <property type="match status" value="1"/>
</dbReference>
<dbReference type="Gene3D" id="2.60.260.20">
    <property type="entry name" value="Urease metallochaperone UreE, N-terminal domain"/>
    <property type="match status" value="2"/>
</dbReference>
<dbReference type="HAMAP" id="MF_01152">
    <property type="entry name" value="DnaJ"/>
    <property type="match status" value="1"/>
</dbReference>
<dbReference type="InterPro" id="IPR012724">
    <property type="entry name" value="DnaJ"/>
</dbReference>
<dbReference type="InterPro" id="IPR002939">
    <property type="entry name" value="DnaJ_C"/>
</dbReference>
<dbReference type="InterPro" id="IPR001623">
    <property type="entry name" value="DnaJ_domain"/>
</dbReference>
<dbReference type="InterPro" id="IPR018253">
    <property type="entry name" value="DnaJ_domain_CS"/>
</dbReference>
<dbReference type="InterPro" id="IPR008971">
    <property type="entry name" value="HSP40/DnaJ_pept-bd"/>
</dbReference>
<dbReference type="InterPro" id="IPR001305">
    <property type="entry name" value="HSP_DnaJ_Cys-rich_dom"/>
</dbReference>
<dbReference type="InterPro" id="IPR036410">
    <property type="entry name" value="HSP_DnaJ_Cys-rich_dom_sf"/>
</dbReference>
<dbReference type="InterPro" id="IPR036869">
    <property type="entry name" value="J_dom_sf"/>
</dbReference>
<dbReference type="NCBIfam" id="TIGR02349">
    <property type="entry name" value="DnaJ_bact"/>
    <property type="match status" value="1"/>
</dbReference>
<dbReference type="NCBIfam" id="NF008035">
    <property type="entry name" value="PRK10767.1"/>
    <property type="match status" value="1"/>
</dbReference>
<dbReference type="PANTHER" id="PTHR43096:SF48">
    <property type="entry name" value="CHAPERONE PROTEIN DNAJ"/>
    <property type="match status" value="1"/>
</dbReference>
<dbReference type="PANTHER" id="PTHR43096">
    <property type="entry name" value="DNAJ HOMOLOG 1, MITOCHONDRIAL-RELATED"/>
    <property type="match status" value="1"/>
</dbReference>
<dbReference type="Pfam" id="PF00226">
    <property type="entry name" value="DnaJ"/>
    <property type="match status" value="1"/>
</dbReference>
<dbReference type="Pfam" id="PF01556">
    <property type="entry name" value="DnaJ_C"/>
    <property type="match status" value="1"/>
</dbReference>
<dbReference type="Pfam" id="PF00684">
    <property type="entry name" value="DnaJ_CXXCXGXG"/>
    <property type="match status" value="1"/>
</dbReference>
<dbReference type="PRINTS" id="PR00625">
    <property type="entry name" value="JDOMAIN"/>
</dbReference>
<dbReference type="SMART" id="SM00271">
    <property type="entry name" value="DnaJ"/>
    <property type="match status" value="1"/>
</dbReference>
<dbReference type="SUPFAM" id="SSF46565">
    <property type="entry name" value="Chaperone J-domain"/>
    <property type="match status" value="1"/>
</dbReference>
<dbReference type="SUPFAM" id="SSF57938">
    <property type="entry name" value="DnaJ/Hsp40 cysteine-rich domain"/>
    <property type="match status" value="1"/>
</dbReference>
<dbReference type="SUPFAM" id="SSF49493">
    <property type="entry name" value="HSP40/DnaJ peptide-binding domain"/>
    <property type="match status" value="2"/>
</dbReference>
<dbReference type="PROSITE" id="PS00636">
    <property type="entry name" value="DNAJ_1"/>
    <property type="match status" value="1"/>
</dbReference>
<dbReference type="PROSITE" id="PS50076">
    <property type="entry name" value="DNAJ_2"/>
    <property type="match status" value="1"/>
</dbReference>
<dbReference type="PROSITE" id="PS51188">
    <property type="entry name" value="ZF_CR"/>
    <property type="match status" value="1"/>
</dbReference>
<evidence type="ECO:0000255" key="1">
    <source>
        <dbReference type="HAMAP-Rule" id="MF_01152"/>
    </source>
</evidence>
<organism>
    <name type="scientific">Buchnera aphidicola subsp. Acyrthosiphon pisum (strain 5A)</name>
    <dbReference type="NCBI Taxonomy" id="563178"/>
    <lineage>
        <taxon>Bacteria</taxon>
        <taxon>Pseudomonadati</taxon>
        <taxon>Pseudomonadota</taxon>
        <taxon>Gammaproteobacteria</taxon>
        <taxon>Enterobacterales</taxon>
        <taxon>Erwiniaceae</taxon>
        <taxon>Buchnera</taxon>
    </lineage>
</organism>
<comment type="function">
    <text evidence="1">Participates actively in the response to hyperosmotic and heat shock by preventing the aggregation of stress-denatured proteins and by disaggregating proteins, also in an autonomous, DnaK-independent fashion. Unfolded proteins bind initially to DnaJ; upon interaction with the DnaJ-bound protein, DnaK hydrolyzes its bound ATP, resulting in the formation of a stable complex. GrpE releases ADP from DnaK; ATP binding to DnaK triggers the release of the substrate protein, thus completing the reaction cycle. Several rounds of ATP-dependent interactions between DnaJ, DnaK and GrpE are required for fully efficient folding. Also involved, together with DnaK and GrpE, in the DNA replication of plasmids through activation of initiation proteins.</text>
</comment>
<comment type="cofactor">
    <cofactor evidence="1">
        <name>Zn(2+)</name>
        <dbReference type="ChEBI" id="CHEBI:29105"/>
    </cofactor>
    <text evidence="1">Binds 2 Zn(2+) ions per monomer.</text>
</comment>
<comment type="subunit">
    <text evidence="1">Homodimer.</text>
</comment>
<comment type="subcellular location">
    <subcellularLocation>
        <location evidence="1">Cytoplasm</location>
    </subcellularLocation>
</comment>
<comment type="domain">
    <text evidence="1">The J domain is necessary and sufficient to stimulate DnaK ATPase activity. Zinc center 1 plays an important role in the autonomous, DnaK-independent chaperone activity of DnaJ. Zinc center 2 is essential for interaction with DnaK and for DnaJ activity.</text>
</comment>
<comment type="similarity">
    <text evidence="1">Belongs to the DnaJ family.</text>
</comment>
<accession>B8D8V3</accession>
<protein>
    <recommendedName>
        <fullName evidence="1">Chaperone protein DnaJ</fullName>
    </recommendedName>
</protein>
<feature type="chain" id="PRO_1000164245" description="Chaperone protein DnaJ">
    <location>
        <begin position="1"/>
        <end position="377"/>
    </location>
</feature>
<feature type="domain" description="J" evidence="1">
    <location>
        <begin position="5"/>
        <end position="70"/>
    </location>
</feature>
<feature type="repeat" description="CXXCXGXG motif">
    <location>
        <begin position="145"/>
        <end position="152"/>
    </location>
</feature>
<feature type="repeat" description="CXXCXGXG motif">
    <location>
        <begin position="162"/>
        <end position="169"/>
    </location>
</feature>
<feature type="repeat" description="CXXCXGXG motif">
    <location>
        <begin position="184"/>
        <end position="191"/>
    </location>
</feature>
<feature type="repeat" description="CXXCXGXG motif">
    <location>
        <begin position="198"/>
        <end position="205"/>
    </location>
</feature>
<feature type="zinc finger region" description="CR-type" evidence="1">
    <location>
        <begin position="132"/>
        <end position="210"/>
    </location>
</feature>
<feature type="binding site" evidence="1">
    <location>
        <position position="145"/>
    </location>
    <ligand>
        <name>Zn(2+)</name>
        <dbReference type="ChEBI" id="CHEBI:29105"/>
        <label>1</label>
    </ligand>
</feature>
<feature type="binding site" evidence="1">
    <location>
        <position position="148"/>
    </location>
    <ligand>
        <name>Zn(2+)</name>
        <dbReference type="ChEBI" id="CHEBI:29105"/>
        <label>1</label>
    </ligand>
</feature>
<feature type="binding site" evidence="1">
    <location>
        <position position="162"/>
    </location>
    <ligand>
        <name>Zn(2+)</name>
        <dbReference type="ChEBI" id="CHEBI:29105"/>
        <label>2</label>
    </ligand>
</feature>
<feature type="binding site" evidence="1">
    <location>
        <position position="165"/>
    </location>
    <ligand>
        <name>Zn(2+)</name>
        <dbReference type="ChEBI" id="CHEBI:29105"/>
        <label>2</label>
    </ligand>
</feature>
<feature type="binding site" evidence="1">
    <location>
        <position position="184"/>
    </location>
    <ligand>
        <name>Zn(2+)</name>
        <dbReference type="ChEBI" id="CHEBI:29105"/>
        <label>2</label>
    </ligand>
</feature>
<feature type="binding site" evidence="1">
    <location>
        <position position="187"/>
    </location>
    <ligand>
        <name>Zn(2+)</name>
        <dbReference type="ChEBI" id="CHEBI:29105"/>
        <label>2</label>
    </ligand>
</feature>
<feature type="binding site" evidence="1">
    <location>
        <position position="198"/>
    </location>
    <ligand>
        <name>Zn(2+)</name>
        <dbReference type="ChEBI" id="CHEBI:29105"/>
        <label>1</label>
    </ligand>
</feature>
<feature type="binding site" evidence="1">
    <location>
        <position position="201"/>
    </location>
    <ligand>
        <name>Zn(2+)</name>
        <dbReference type="ChEBI" id="CHEBI:29105"/>
        <label>1</label>
    </ligand>
</feature>